<feature type="signal peptide" evidence="1">
    <location>
        <begin position="1"/>
        <end position="19"/>
    </location>
</feature>
<feature type="chain" id="PRO_0000025812" description="Prokineticin Bv8" evidence="5">
    <location>
        <begin position="20"/>
        <end position="96"/>
    </location>
</feature>
<feature type="region of interest" description="May be important for binding to prokineticin receptor 2" evidence="9">
    <location>
        <begin position="20"/>
        <end position="24"/>
    </location>
</feature>
<feature type="disulfide bond" evidence="4">
    <location>
        <begin position="26"/>
        <end position="38"/>
    </location>
</feature>
<feature type="disulfide bond" evidence="4">
    <location>
        <begin position="32"/>
        <end position="50"/>
    </location>
</feature>
<feature type="disulfide bond" evidence="4">
    <location>
        <begin position="37"/>
        <end position="78"/>
    </location>
</feature>
<feature type="disulfide bond" evidence="4">
    <location>
        <begin position="60"/>
        <end position="86"/>
    </location>
</feature>
<feature type="disulfide bond" evidence="4">
    <location>
        <begin position="80"/>
        <end position="95"/>
    </location>
</feature>
<feature type="mutagenesis site" description="Does not activate prokineticin receptor 2." evidence="4">
    <location>
        <begin position="20"/>
        <end position="24"/>
    </location>
</feature>
<feature type="helix" evidence="10">
    <location>
        <begin position="29"/>
        <end position="31"/>
    </location>
</feature>
<feature type="strand" evidence="10">
    <location>
        <begin position="49"/>
        <end position="52"/>
    </location>
</feature>
<feature type="strand" evidence="10">
    <location>
        <begin position="66"/>
        <end position="68"/>
    </location>
</feature>
<feature type="strand" evidence="10">
    <location>
        <begin position="86"/>
        <end position="88"/>
    </location>
</feature>
<feature type="strand" evidence="10">
    <location>
        <begin position="90"/>
        <end position="95"/>
    </location>
</feature>
<comment type="function">
    <text evidence="1 2 3 4 8">Potent agonist for both PKR1/PROKR1 and PKR2/PROKR2, and inducer of a potent and long-lasting hyperalgesia (PubMed:16299550, PubMed:20677202). Shows an EC(50) of 0.264 nM, when tested on neuroblastoma cells (SH-SY5Y) which endogenously express mainly PKR2/PROKR2 (PubMed:20677202). Also potentiates capsaicin-induced TRPV1 current, when tested on DRG neurons (PubMed:16687502, PubMed:20677202). Induces a biphasic hyperalgesia to tactile and thermal stimuli after systemic injection of this protein into rat (PubMed:10422759, PubMed:12466223). The initial phase of hyperalgesia is caused by a local action on nociceptors, because intraplantar injection of this protein causes a strong and localized hyperalgesia with a similar time course to that of the initial phase of hyperalgesia seen with systemic injection. The secondary phase of hyperalgesia is not seen with local intraplantar injection and is therefore probably attributable to a central action of this protein (PubMed:16687502). At subnanomolar concentrations, this protein both induces potent chemotaxis of macrophages and stimulates LPS-induced production of the pro-inflammatory cytokines IL-1 and IL-12 (PubMed:16299550). In vivo, this protein potently stimulates the contraction of the guinea-pig gastrointestinal (GI) smooth muscle (at nanomolar concentration) (PubMed:10422759).</text>
</comment>
<comment type="subcellular location">
    <subcellularLocation>
        <location evidence="1">Secreted</location>
    </subcellularLocation>
</comment>
<comment type="tissue specificity">
    <text evidence="7">Expressed by the skin glands.</text>
</comment>
<comment type="mass spectrometry"/>
<comment type="similarity">
    <text evidence="6">Belongs to the AVIT (prokineticin) family.</text>
</comment>
<proteinExistence type="evidence at protein level"/>
<evidence type="ECO:0000269" key="1">
    <source>
    </source>
</evidence>
<evidence type="ECO:0000269" key="2">
    <source>
    </source>
</evidence>
<evidence type="ECO:0000269" key="3">
    <source>
    </source>
</evidence>
<evidence type="ECO:0000269" key="4">
    <source>
    </source>
</evidence>
<evidence type="ECO:0000303" key="5">
    <source>
    </source>
</evidence>
<evidence type="ECO:0000305" key="6"/>
<evidence type="ECO:0000305" key="7">
    <source>
    </source>
</evidence>
<evidence type="ECO:0000305" key="8">
    <source>
    </source>
</evidence>
<evidence type="ECO:0000305" key="9">
    <source>
    </source>
</evidence>
<evidence type="ECO:0007829" key="10">
    <source>
        <dbReference type="PDB" id="2KRA"/>
    </source>
</evidence>
<protein>
    <recommendedName>
        <fullName evidence="5">Prokineticin Bv8</fullName>
    </recommendedName>
</protein>
<name>BV8_BOMVA</name>
<keyword id="KW-0002">3D-structure</keyword>
<keyword id="KW-0903">Direct protein sequencing</keyword>
<keyword id="KW-1015">Disulfide bond</keyword>
<keyword id="KW-1213">G-protein coupled receptor impairing toxin</keyword>
<keyword id="KW-0964">Secreted</keyword>
<keyword id="KW-0732">Signal</keyword>
<keyword id="KW-0800">Toxin</keyword>
<reference key="1">
    <citation type="journal article" date="1999" name="Eur. J. Pharmacol.">
        <title>Bv8, a small protein from frog skin and its homologue from snake venom induce hyperalgesia in rats.</title>
        <authorList>
            <person name="Mollay C."/>
            <person name="Wechselberger C."/>
            <person name="Mignogna G."/>
            <person name="Negri L."/>
            <person name="Melchiorri P."/>
            <person name="Barra D."/>
            <person name="Kreil G."/>
        </authorList>
    </citation>
    <scope>NUCLEOTIDE SEQUENCE [MRNA]</scope>
    <scope>PROTEIN SEQUENCE OF 20-96</scope>
    <scope>FUNCTION</scope>
    <scope>MASS SPECTROMETRY</scope>
    <scope>SUBCELLULAR LOCATION</scope>
    <source>
        <tissue>Skin secretion</tissue>
    </source>
</reference>
<reference key="2">
    <citation type="journal article" date="2002" name="Br. J. Pharmacol.">
        <title>Nociceptive sensitization by the secretory protein Bv8.</title>
        <authorList>
            <person name="Negri L."/>
            <person name="Lattanzi R."/>
            <person name="Giannini E."/>
            <person name="Metere A."/>
            <person name="Colucci M."/>
            <person name="Barra D."/>
            <person name="Kreil G."/>
            <person name="Melchiorri P."/>
        </authorList>
    </citation>
    <scope>FUNCTION</scope>
    <source>
        <tissue>Skin secretion</tissue>
    </source>
</reference>
<reference key="3">
    <citation type="journal article" date="2006" name="Br. J. Pharmacol.">
        <title>Bv8, the amphibian homologue of the mammalian prokineticins, induces a proinflammatory phenotype of mouse macrophages.</title>
        <authorList>
            <person name="Martucci C."/>
            <person name="Franchi S."/>
            <person name="Giannini E."/>
            <person name="Tian H."/>
            <person name="Melchiorri P."/>
            <person name="Negri L."/>
            <person name="Sacerdote P."/>
        </authorList>
    </citation>
    <scope>FUNCTION</scope>
    <source>
        <tissue>Skin secretion</tissue>
    </source>
</reference>
<reference key="4">
    <citation type="journal article" date="2006" name="J. Neurosci.">
        <title>Sensitization of transient receptor potential vanilloid 1 by the prokineticin receptor agonist Bv8.</title>
        <authorList>
            <person name="Vellani V."/>
            <person name="Colucci M."/>
            <person name="Lattanzi R."/>
            <person name="Giannini E."/>
            <person name="Negri L."/>
            <person name="Melchiorri P."/>
            <person name="McNaughton P.A."/>
        </authorList>
    </citation>
    <scope>FUNCTION</scope>
    <source>
        <tissue>Skin secretion</tissue>
    </source>
</reference>
<reference key="5">
    <citation type="journal article" date="2010" name="ChemBioChem">
        <title>Chemical synthesis and structure of the prokineticin Bv8.</title>
        <authorList>
            <person name="Morales R.A."/>
            <person name="Daly N.L."/>
            <person name="Vetter I."/>
            <person name="Mobli M."/>
            <person name="Napier I.A."/>
            <person name="Craik D.J."/>
            <person name="Lewis R.J."/>
            <person name="Christie M.J."/>
            <person name="King G.F."/>
            <person name="Alewood P.F."/>
            <person name="Durek T."/>
        </authorList>
    </citation>
    <scope>STRUCTURE BY NMR OF 20-96</scope>
    <scope>SYNTHESIS OF 20-96</scope>
    <scope>FUNCTION</scope>
    <scope>DISULFIDE BOND</scope>
    <scope>ACTIVITY PROFILE</scope>
    <scope>MUTAGENESIS OF 20-ALA--GLY-24</scope>
</reference>
<organism>
    <name type="scientific">Bombina variegata</name>
    <name type="common">Yellow-bellied toad</name>
    <dbReference type="NCBI Taxonomy" id="8348"/>
    <lineage>
        <taxon>Eukaryota</taxon>
        <taxon>Metazoa</taxon>
        <taxon>Chordata</taxon>
        <taxon>Craniata</taxon>
        <taxon>Vertebrata</taxon>
        <taxon>Euteleostomi</taxon>
        <taxon>Amphibia</taxon>
        <taxon>Batrachia</taxon>
        <taxon>Anura</taxon>
        <taxon>Bombinatoridae</taxon>
        <taxon>Bombina</taxon>
    </lineage>
</organism>
<dbReference type="EMBL" id="AF168790">
    <property type="protein sequence ID" value="AAD45816.1"/>
    <property type="molecule type" value="mRNA"/>
</dbReference>
<dbReference type="PDB" id="2KRA">
    <property type="method" value="NMR"/>
    <property type="chains" value="A=20-96"/>
</dbReference>
<dbReference type="PDBsum" id="2KRA"/>
<dbReference type="BMRB" id="Q9PW66"/>
<dbReference type="SMR" id="Q9PW66"/>
<dbReference type="EvolutionaryTrace" id="Q9PW66"/>
<dbReference type="GO" id="GO:0005576">
    <property type="term" value="C:extracellular region"/>
    <property type="evidence" value="ECO:0007669"/>
    <property type="project" value="UniProtKB-SubCell"/>
</dbReference>
<dbReference type="GO" id="GO:0090729">
    <property type="term" value="F:toxin activity"/>
    <property type="evidence" value="ECO:0007669"/>
    <property type="project" value="UniProtKB-KW"/>
</dbReference>
<dbReference type="GO" id="GO:0001935">
    <property type="term" value="P:endothelial cell proliferation"/>
    <property type="evidence" value="ECO:0007669"/>
    <property type="project" value="TreeGrafter"/>
</dbReference>
<dbReference type="Gene3D" id="2.10.80.10">
    <property type="entry name" value="Lipase, subunit A"/>
    <property type="match status" value="1"/>
</dbReference>
<dbReference type="InterPro" id="IPR009523">
    <property type="entry name" value="Prokineticin"/>
</dbReference>
<dbReference type="InterPro" id="IPR023569">
    <property type="entry name" value="Prokineticin_domain"/>
</dbReference>
<dbReference type="PANTHER" id="PTHR18821:SF2">
    <property type="entry name" value="DICKKOPF-RELATED PROTEIN 3-LIKE"/>
    <property type="match status" value="1"/>
</dbReference>
<dbReference type="PANTHER" id="PTHR18821">
    <property type="entry name" value="PROKINETICIN"/>
    <property type="match status" value="1"/>
</dbReference>
<dbReference type="Pfam" id="PF06607">
    <property type="entry name" value="Prokineticin"/>
    <property type="match status" value="1"/>
</dbReference>
<dbReference type="SUPFAM" id="SSF57190">
    <property type="entry name" value="Colipase-like"/>
    <property type="match status" value="2"/>
</dbReference>
<sequence>MKCFAQIVVLLLVIAFSHGAVITGACDKDVQCGSGTCCAASAWSRNIRFCIPLGNSGEDCHPASHKVPYDGKRLSSLCPCKSGLTCSKSGEKFKCS</sequence>
<accession>Q9PW66</accession>